<dbReference type="EMBL" id="X78401">
    <property type="protein sequence ID" value="CAA55158.1"/>
    <property type="molecule type" value="Genomic_DNA"/>
</dbReference>
<dbReference type="EMBL" id="M10074">
    <property type="protein sequence ID" value="AAA32278.1"/>
    <property type="molecule type" value="Genomic_DNA"/>
</dbReference>
<dbReference type="EMBL" id="AF217253">
    <property type="protein sequence ID" value="AAF75030.1"/>
    <property type="molecule type" value="Genomic_DNA"/>
</dbReference>
<dbReference type="EMBL" id="BK000583">
    <property type="protein sequence ID" value="DAA01028.1"/>
    <property type="molecule type" value="Genomic_DNA"/>
</dbReference>
<dbReference type="RefSeq" id="NP_059612.1">
    <property type="nucleotide sequence ID" value="NC_002371.2"/>
</dbReference>
<dbReference type="SMR" id="Q38662"/>
<dbReference type="GeneID" id="1262822"/>
<dbReference type="KEGG" id="vg:1262822"/>
<dbReference type="OrthoDB" id="13789at10239"/>
<dbReference type="Proteomes" id="UP000001795">
    <property type="component" value="Segment"/>
</dbReference>
<dbReference type="Proteomes" id="UP000007960">
    <property type="component" value="Segment"/>
</dbReference>
<dbReference type="Gene3D" id="1.10.3790.10">
    <property type="entry name" value="NinB"/>
    <property type="match status" value="1"/>
</dbReference>
<dbReference type="InterPro" id="IPR036619">
    <property type="entry name" value="NinB_sf"/>
</dbReference>
<dbReference type="InterPro" id="IPR008711">
    <property type="entry name" value="Recombinase_NinB"/>
</dbReference>
<dbReference type="Pfam" id="PF05772">
    <property type="entry name" value="NinB"/>
    <property type="match status" value="1"/>
</dbReference>
<dbReference type="SUPFAM" id="SSF103370">
    <property type="entry name" value="NinB"/>
    <property type="match status" value="1"/>
</dbReference>
<organism>
    <name type="scientific">Salmonella phage P22</name>
    <name type="common">Bacteriophage P22</name>
    <dbReference type="NCBI Taxonomy" id="10754"/>
    <lineage>
        <taxon>Viruses</taxon>
        <taxon>Duplodnaviria</taxon>
        <taxon>Heunggongvirae</taxon>
        <taxon>Uroviricota</taxon>
        <taxon>Caudoviricetes</taxon>
        <taxon>Lederbergvirus</taxon>
    </lineage>
</organism>
<evidence type="ECO:0000305" key="1"/>
<comment type="similarity">
    <text evidence="1">Belongs to the ninB family.</text>
</comment>
<organismHost>
    <name type="scientific">Salmonella typhimurium</name>
    <dbReference type="NCBI Taxonomy" id="90371"/>
</organismHost>
<accession>Q38662</accession>
<accession>Q7PCE6</accession>
<gene>
    <name type="primary">ninB</name>
</gene>
<reference key="1">
    <citation type="submission" date="1994-05" db="EMBL/GenBank/DDBJ databases">
        <title>Nucleotide sequence of PR-operon of P22 is a mosaic of other lambdoid chromosomes and reveals functional implications for the late gene expression.</title>
        <authorList>
            <person name="Kroeger M."/>
            <person name="Hobom G."/>
        </authorList>
    </citation>
    <scope>NUCLEOTIDE SEQUENCE [GENOMIC DNA]</scope>
</reference>
<reference key="2">
    <citation type="journal article" date="2000" name="J. Bacteriol.">
        <title>Sequence of the genome of Salmonella bacteriophage P22.</title>
        <authorList>
            <person name="Vander Byl C.S."/>
            <person name="Kropinski A.M.B."/>
        </authorList>
    </citation>
    <scope>NUCLEOTIDE SEQUENCE [LARGE SCALE GENOMIC DNA]</scope>
</reference>
<reference key="3">
    <citation type="journal article" date="2003" name="J. Bacteriol.">
        <title>Corrected sequence of the bacteriophage P22 genome.</title>
        <authorList>
            <person name="Pedulla M.L."/>
            <person name="Ford M.E."/>
            <person name="Karthikeyan T."/>
            <person name="Houtz J.M."/>
            <person name="Hendrix R.W."/>
            <person name="Hatfull G.F."/>
            <person name="Poteete A.R."/>
            <person name="Gilcrease E.B."/>
            <person name="Winn-Stapley D.A."/>
            <person name="Casjens S.R."/>
        </authorList>
    </citation>
    <scope>NUCLEOTIDE SEQUENCE [LARGE SCALE GENOMIC DNA]</scope>
</reference>
<protein>
    <recommendedName>
        <fullName>Protein ninB</fullName>
    </recommendedName>
</protein>
<keyword id="KW-1185">Reference proteome</keyword>
<feature type="chain" id="PRO_0000077611" description="Protein ninB">
    <location>
        <begin position="1"/>
        <end position="145"/>
    </location>
</feature>
<sequence length="145" mass="16408">MKKLTFEIRSPAHQQNAIHAVQQILPDPTKPIVVTIQERNRSLDQNRKLWACLGDVSRQVNWHGRWLDAESWKCVFTAALKQQDVVPNLAGHGFVVIGQSTSRMRVSEFAELLELIQAFGTERGVKWSDEARLALECKARFGDAA</sequence>
<name>NINB_BPP22</name>
<proteinExistence type="inferred from homology"/>